<protein>
    <recommendedName>
        <fullName evidence="1">Large ribosomal subunit protein bL25</fullName>
    </recommendedName>
    <alternativeName>
        <fullName evidence="2">50S ribosomal protein L25</fullName>
    </alternativeName>
    <alternativeName>
        <fullName evidence="1">General stress protein CTC</fullName>
    </alternativeName>
</protein>
<keyword id="KW-1185">Reference proteome</keyword>
<keyword id="KW-0687">Ribonucleoprotein</keyword>
<keyword id="KW-0689">Ribosomal protein</keyword>
<keyword id="KW-0694">RNA-binding</keyword>
<keyword id="KW-0699">rRNA-binding</keyword>
<evidence type="ECO:0000255" key="1">
    <source>
        <dbReference type="HAMAP-Rule" id="MF_01334"/>
    </source>
</evidence>
<evidence type="ECO:0000305" key="2"/>
<organism>
    <name type="scientific">Orientia tsutsugamushi (strain Boryong)</name>
    <name type="common">Rickettsia tsutsugamushi</name>
    <dbReference type="NCBI Taxonomy" id="357244"/>
    <lineage>
        <taxon>Bacteria</taxon>
        <taxon>Pseudomonadati</taxon>
        <taxon>Pseudomonadota</taxon>
        <taxon>Alphaproteobacteria</taxon>
        <taxon>Rickettsiales</taxon>
        <taxon>Rickettsiaceae</taxon>
        <taxon>Rickettsieae</taxon>
        <taxon>Orientia</taxon>
    </lineage>
</organism>
<feature type="chain" id="PRO_1000052911" description="Large ribosomal subunit protein bL25">
    <location>
        <begin position="1"/>
        <end position="207"/>
    </location>
</feature>
<dbReference type="EMBL" id="AM494475">
    <property type="protein sequence ID" value="CAM80897.1"/>
    <property type="molecule type" value="Genomic_DNA"/>
</dbReference>
<dbReference type="RefSeq" id="WP_011945055.1">
    <property type="nucleotide sequence ID" value="NC_009488.1"/>
</dbReference>
<dbReference type="SMR" id="A5CF34"/>
<dbReference type="KEGG" id="ots:OTBS_1802"/>
<dbReference type="eggNOG" id="COG1825">
    <property type="taxonomic scope" value="Bacteria"/>
</dbReference>
<dbReference type="HOGENOM" id="CLU_075939_0_0_5"/>
<dbReference type="Proteomes" id="UP000001565">
    <property type="component" value="Chromosome"/>
</dbReference>
<dbReference type="GO" id="GO:0022625">
    <property type="term" value="C:cytosolic large ribosomal subunit"/>
    <property type="evidence" value="ECO:0007669"/>
    <property type="project" value="TreeGrafter"/>
</dbReference>
<dbReference type="GO" id="GO:0008097">
    <property type="term" value="F:5S rRNA binding"/>
    <property type="evidence" value="ECO:0007669"/>
    <property type="project" value="InterPro"/>
</dbReference>
<dbReference type="GO" id="GO:0003735">
    <property type="term" value="F:structural constituent of ribosome"/>
    <property type="evidence" value="ECO:0007669"/>
    <property type="project" value="InterPro"/>
</dbReference>
<dbReference type="GO" id="GO:0006412">
    <property type="term" value="P:translation"/>
    <property type="evidence" value="ECO:0007669"/>
    <property type="project" value="UniProtKB-UniRule"/>
</dbReference>
<dbReference type="CDD" id="cd00495">
    <property type="entry name" value="Ribosomal_L25_TL5_CTC"/>
    <property type="match status" value="1"/>
</dbReference>
<dbReference type="Gene3D" id="2.170.120.20">
    <property type="entry name" value="Ribosomal protein L25, beta domain"/>
    <property type="match status" value="1"/>
</dbReference>
<dbReference type="Gene3D" id="2.40.240.10">
    <property type="entry name" value="Ribosomal Protein L25, Chain P"/>
    <property type="match status" value="1"/>
</dbReference>
<dbReference type="HAMAP" id="MF_01334">
    <property type="entry name" value="Ribosomal_bL25_CTC"/>
    <property type="match status" value="1"/>
</dbReference>
<dbReference type="InterPro" id="IPR020056">
    <property type="entry name" value="Rbsml_bL25/Gln-tRNA_synth_N"/>
</dbReference>
<dbReference type="InterPro" id="IPR011035">
    <property type="entry name" value="Ribosomal_bL25/Gln-tRNA_synth"/>
</dbReference>
<dbReference type="InterPro" id="IPR020057">
    <property type="entry name" value="Ribosomal_bL25_b-dom"/>
</dbReference>
<dbReference type="InterPro" id="IPR037121">
    <property type="entry name" value="Ribosomal_bL25_C"/>
</dbReference>
<dbReference type="InterPro" id="IPR001021">
    <property type="entry name" value="Ribosomal_bL25_long"/>
</dbReference>
<dbReference type="InterPro" id="IPR029751">
    <property type="entry name" value="Ribosomal_L25_dom"/>
</dbReference>
<dbReference type="InterPro" id="IPR020930">
    <property type="entry name" value="Ribosomal_uL5_bac-type"/>
</dbReference>
<dbReference type="NCBIfam" id="TIGR00731">
    <property type="entry name" value="bL25_bact_ctc"/>
    <property type="match status" value="1"/>
</dbReference>
<dbReference type="NCBIfam" id="NF004128">
    <property type="entry name" value="PRK05618.1-2"/>
    <property type="match status" value="1"/>
</dbReference>
<dbReference type="NCBIfam" id="NF004612">
    <property type="entry name" value="PRK05943.1"/>
    <property type="match status" value="1"/>
</dbReference>
<dbReference type="PANTHER" id="PTHR33284">
    <property type="entry name" value="RIBOSOMAL PROTEIN L25/GLN-TRNA SYNTHETASE, ANTI-CODON-BINDING DOMAIN-CONTAINING PROTEIN"/>
    <property type="match status" value="1"/>
</dbReference>
<dbReference type="PANTHER" id="PTHR33284:SF1">
    <property type="entry name" value="RIBOSOMAL PROTEIN L25_GLN-TRNA SYNTHETASE, ANTI-CODON-BINDING DOMAIN-CONTAINING PROTEIN"/>
    <property type="match status" value="1"/>
</dbReference>
<dbReference type="Pfam" id="PF01386">
    <property type="entry name" value="Ribosomal_L25p"/>
    <property type="match status" value="1"/>
</dbReference>
<dbReference type="Pfam" id="PF14693">
    <property type="entry name" value="Ribosomal_TL5_C"/>
    <property type="match status" value="1"/>
</dbReference>
<dbReference type="SUPFAM" id="SSF50715">
    <property type="entry name" value="Ribosomal protein L25-like"/>
    <property type="match status" value="1"/>
</dbReference>
<proteinExistence type="inferred from homology"/>
<reference key="1">
    <citation type="journal article" date="2007" name="Proc. Natl. Acad. Sci. U.S.A.">
        <title>The Orientia tsutsugamushi genome reveals massive proliferation of conjugative type IV secretion system and host-cell interaction genes.</title>
        <authorList>
            <person name="Cho N.-H."/>
            <person name="Kim H.-R."/>
            <person name="Lee J.-H."/>
            <person name="Kim S.-Y."/>
            <person name="Kim J."/>
            <person name="Cha S."/>
            <person name="Kim S.-Y."/>
            <person name="Darby A.C."/>
            <person name="Fuxelius H.-H."/>
            <person name="Yin J."/>
            <person name="Kim J.H."/>
            <person name="Kim J."/>
            <person name="Lee S.J."/>
            <person name="Koh Y.-S."/>
            <person name="Jang W.-J."/>
            <person name="Park K.-H."/>
            <person name="Andersson S.G.E."/>
            <person name="Choi M.-S."/>
            <person name="Kim I.-S."/>
        </authorList>
    </citation>
    <scope>NUCLEOTIDE SEQUENCE [LARGE SCALE GENOMIC DNA]</scope>
    <source>
        <strain>Boryong</strain>
    </source>
</reference>
<comment type="function">
    <text evidence="1">This is one of the proteins that binds to the 5S RNA in the ribosome where it forms part of the central protuberance.</text>
</comment>
<comment type="subunit">
    <text evidence="1">Part of the 50S ribosomal subunit; part of the 5S rRNA/L5/L18/L25 subcomplex. Contacts the 5S rRNA. Binds to the 5S rRNA independently of L5 and L18.</text>
</comment>
<comment type="similarity">
    <text evidence="1">Belongs to the bacterial ribosomal protein bL25 family. CTC subfamily.</text>
</comment>
<name>RL25_ORITB</name>
<gene>
    <name evidence="1" type="primary">rplY</name>
    <name evidence="1" type="synonym">ctc</name>
    <name type="ordered locus">OTBS_1802</name>
</gene>
<sequence length="207" mass="22941">MNEMLTLVGQLRSDFGTSSARALRRQGKVPGVIYKKGITPIHVCTLEKEVAKLYRKPFFSSTVIQLQVDDQRFKVLPKAVQLHPVTEFMNHIDFILVEQNGSMQKVKVPISFEGKEKSLGIKRGGYLNIVKRYVDLLCPVDKIPQCIKCDIANVSVGASIKISRLELPEGCNLVKSTTDYVIASVIGKSSKQDKEEEGTAEDGADSK</sequence>
<accession>A5CF34</accession>